<proteinExistence type="evidence at transcript level"/>
<protein>
    <recommendedName>
        <fullName evidence="1">STING ER exit protein</fullName>
        <shortName evidence="1">STEEP</shortName>
    </recommendedName>
</protein>
<evidence type="ECO:0000250" key="1">
    <source>
        <dbReference type="UniProtKB" id="Q9H5V9"/>
    </source>
</evidence>
<evidence type="ECO:0000255" key="2"/>
<evidence type="ECO:0000305" key="3"/>
<keyword id="KW-0175">Coiled coil</keyword>
<keyword id="KW-0963">Cytoplasm</keyword>
<keyword id="KW-0256">Endoplasmic reticulum</keyword>
<keyword id="KW-0472">Membrane</keyword>
<keyword id="KW-0539">Nucleus</keyword>
<keyword id="KW-1185">Reference proteome</keyword>
<reference key="1">
    <citation type="submission" date="2005-08" db="EMBL/GenBank/DDBJ databases">
        <authorList>
            <consortium name="NIH - Mammalian Gene Collection (MGC) project"/>
        </authorList>
    </citation>
    <scope>NUCLEOTIDE SEQUENCE [LARGE SCALE MRNA]</scope>
    <source>
        <strain>Crossbred X Angus</strain>
        <tissue>Ileum</tissue>
    </source>
</reference>
<sequence>MPKVVSRSVVCSDTRDREEYDDGEKPLHVYYCLCGQMVLVLDCQLEKLPMRPRDRSRVIDGAKHAHKFCNTEDEETIYLRRPEGIERQYRKKCAKCGLPLFYQSQPKNAPVTFIVDGAVVKFGQGFGKTNIYTQKQEPPKKVMMTKRTKDMGKFSSVTVSTIDEEEEEIEAREVADSYAQNAKVIEKQLERKGMSKRRLQELAELEAKKAKMKGTLIDNQFK</sequence>
<organism>
    <name type="scientific">Bos taurus</name>
    <name type="common">Bovine</name>
    <dbReference type="NCBI Taxonomy" id="9913"/>
    <lineage>
        <taxon>Eukaryota</taxon>
        <taxon>Metazoa</taxon>
        <taxon>Chordata</taxon>
        <taxon>Craniata</taxon>
        <taxon>Vertebrata</taxon>
        <taxon>Euteleostomi</taxon>
        <taxon>Mammalia</taxon>
        <taxon>Eutheria</taxon>
        <taxon>Laurasiatheria</taxon>
        <taxon>Artiodactyla</taxon>
        <taxon>Ruminantia</taxon>
        <taxon>Pecora</taxon>
        <taxon>Bovidae</taxon>
        <taxon>Bovinae</taxon>
        <taxon>Bos</taxon>
    </lineage>
</organism>
<comment type="function">
    <text evidence="1">Molecular adapter that stimulates membrane curvature formation and subsequent endoplasmic reticulum exit site (ERES) establishment by recruiting PI3K complex I, leading to COPII vesicle-mediated transport. Promotes endoplasmic reticulum (ER) exit of cGAMP-activated STING1 oligomers.</text>
</comment>
<comment type="subunit">
    <text evidence="1">Interacts with STING1; interaction takes place upon cGAMP-activation and STING1 phosphorylation by MAP3K7/TAK1 and leads to recruitment of PI3K complex I. Interacts with PIK3C3; the STING1-STEEP1 interaction leads to recruitment of PI3K complex I. Interacts with ATG14.</text>
</comment>
<comment type="subcellular location">
    <subcellularLocation>
        <location evidence="1">Cytoplasm</location>
    </subcellularLocation>
    <subcellularLocation>
        <location evidence="1">Endoplasmic reticulum membrane</location>
        <topology evidence="1">Peripheral membrane protein</topology>
        <orientation evidence="1">Cytoplasmic side</orientation>
    </subcellularLocation>
    <subcellularLocation>
        <location evidence="1">Nucleus</location>
    </subcellularLocation>
    <text evidence="1">Recruited to the endoplasmic reticulum following interaction with phosphorylated STING1.</text>
</comment>
<comment type="similarity">
    <text evidence="3">Belongs to the STEEP1 family.</text>
</comment>
<gene>
    <name evidence="1" type="primary">STEEP1</name>
</gene>
<name>STEEP_BOVIN</name>
<dbReference type="EMBL" id="BC102059">
    <property type="protein sequence ID" value="AAI02060.1"/>
    <property type="molecule type" value="mRNA"/>
</dbReference>
<dbReference type="RefSeq" id="NP_001029391.1">
    <property type="nucleotide sequence ID" value="NM_001034219.2"/>
</dbReference>
<dbReference type="SMR" id="Q3T197"/>
<dbReference type="FunCoup" id="Q3T197">
    <property type="interactions" value="3940"/>
</dbReference>
<dbReference type="STRING" id="9913.ENSBTAP00000055299"/>
<dbReference type="PaxDb" id="9913-ENSBTAP00000055299"/>
<dbReference type="GeneID" id="504687"/>
<dbReference type="KEGG" id="bta:504687"/>
<dbReference type="CTD" id="63932"/>
<dbReference type="VEuPathDB" id="HostDB:ENSBTAG00000047169"/>
<dbReference type="eggNOG" id="KOG4397">
    <property type="taxonomic scope" value="Eukaryota"/>
</dbReference>
<dbReference type="HOGENOM" id="CLU_099571_1_0_1"/>
<dbReference type="InParanoid" id="Q3T197"/>
<dbReference type="OMA" id="HVTFVMF"/>
<dbReference type="OrthoDB" id="418131at2759"/>
<dbReference type="TreeFam" id="TF300272"/>
<dbReference type="Reactome" id="R-BTA-72163">
    <property type="pathway name" value="mRNA Splicing - Major Pathway"/>
</dbReference>
<dbReference type="Proteomes" id="UP000009136">
    <property type="component" value="Chromosome X"/>
</dbReference>
<dbReference type="Bgee" id="ENSBTAG00000047169">
    <property type="expression patterns" value="Expressed in oocyte and 105 other cell types or tissues"/>
</dbReference>
<dbReference type="GO" id="GO:0044297">
    <property type="term" value="C:cell body"/>
    <property type="evidence" value="ECO:0000250"/>
    <property type="project" value="UniProtKB"/>
</dbReference>
<dbReference type="GO" id="GO:0005737">
    <property type="term" value="C:cytoplasm"/>
    <property type="evidence" value="ECO:0000250"/>
    <property type="project" value="UniProtKB"/>
</dbReference>
<dbReference type="GO" id="GO:0005789">
    <property type="term" value="C:endoplasmic reticulum membrane"/>
    <property type="evidence" value="ECO:0007669"/>
    <property type="project" value="UniProtKB-SubCell"/>
</dbReference>
<dbReference type="GO" id="GO:0005634">
    <property type="term" value="C:nucleus"/>
    <property type="evidence" value="ECO:0000250"/>
    <property type="project" value="UniProtKB"/>
</dbReference>
<dbReference type="GO" id="GO:0030674">
    <property type="term" value="F:protein-macromolecule adaptor activity"/>
    <property type="evidence" value="ECO:0000250"/>
    <property type="project" value="UniProtKB"/>
</dbReference>
<dbReference type="GO" id="GO:0090158">
    <property type="term" value="P:endoplasmic reticulum membrane organization"/>
    <property type="evidence" value="ECO:0000250"/>
    <property type="project" value="UniProtKB"/>
</dbReference>
<dbReference type="GO" id="GO:0006888">
    <property type="term" value="P:endoplasmic reticulum to Golgi vesicle-mediated transport"/>
    <property type="evidence" value="ECO:0000250"/>
    <property type="project" value="UniProtKB"/>
</dbReference>
<dbReference type="GO" id="GO:0032527">
    <property type="term" value="P:protein exit from endoplasmic reticulum"/>
    <property type="evidence" value="ECO:0000250"/>
    <property type="project" value="UniProtKB"/>
</dbReference>
<dbReference type="InterPro" id="IPR029704">
    <property type="entry name" value="STEEP-like"/>
</dbReference>
<dbReference type="PANTHER" id="PTHR46355:SF1">
    <property type="entry name" value="STING ER EXIT PROTEIN"/>
    <property type="match status" value="1"/>
</dbReference>
<dbReference type="PANTHER" id="PTHR46355">
    <property type="entry name" value="UPF0428 PROTEIN CXORF56"/>
    <property type="match status" value="1"/>
</dbReference>
<accession>Q3T197</accession>
<feature type="chain" id="PRO_0000287608" description="STING ER exit protein">
    <location>
        <begin position="1"/>
        <end position="222"/>
    </location>
</feature>
<feature type="coiled-coil region" evidence="2">
    <location>
        <begin position="170"/>
        <end position="220"/>
    </location>
</feature>